<accession>A7N6S2</accession>
<accession>Q693Z6</accession>
<name>CQSS_VIBC1</name>
<keyword id="KW-0067">ATP-binding</keyword>
<keyword id="KW-1003">Cell membrane</keyword>
<keyword id="KW-0378">Hydrolase</keyword>
<keyword id="KW-0418">Kinase</keyword>
<keyword id="KW-0472">Membrane</keyword>
<keyword id="KW-0547">Nucleotide-binding</keyword>
<keyword id="KW-0597">Phosphoprotein</keyword>
<keyword id="KW-0904">Protein phosphatase</keyword>
<keyword id="KW-0808">Transferase</keyword>
<keyword id="KW-0812">Transmembrane</keyword>
<keyword id="KW-1133">Transmembrane helix</keyword>
<evidence type="ECO:0000255" key="1"/>
<evidence type="ECO:0000255" key="2">
    <source>
        <dbReference type="PROSITE-ProRule" id="PRU00107"/>
    </source>
</evidence>
<evidence type="ECO:0000255" key="3">
    <source>
        <dbReference type="PROSITE-ProRule" id="PRU00169"/>
    </source>
</evidence>
<evidence type="ECO:0000269" key="4">
    <source>
    </source>
</evidence>
<evidence type="ECO:0000305" key="5"/>
<gene>
    <name type="primary">cqsS</name>
    <name type="ordered locus">VIBHAR_06089</name>
</gene>
<feature type="chain" id="PRO_0000316892" description="CAI-1 autoinducer sensor kinase/phosphatase CqsS">
    <location>
        <begin position="1"/>
        <end position="681"/>
    </location>
</feature>
<feature type="transmembrane region" description="Helical" evidence="1">
    <location>
        <begin position="17"/>
        <end position="37"/>
    </location>
</feature>
<feature type="transmembrane region" description="Helical" evidence="1">
    <location>
        <begin position="73"/>
        <end position="93"/>
    </location>
</feature>
<feature type="transmembrane region" description="Helical" evidence="1">
    <location>
        <begin position="112"/>
        <end position="132"/>
    </location>
</feature>
<feature type="transmembrane region" description="Helical" evidence="1">
    <location>
        <begin position="148"/>
        <end position="168"/>
    </location>
</feature>
<feature type="domain" description="Histidine kinase" evidence="2">
    <location>
        <begin position="187"/>
        <end position="413"/>
    </location>
</feature>
<feature type="domain" description="Response regulatory" evidence="3">
    <location>
        <begin position="564"/>
        <end position="681"/>
    </location>
</feature>
<feature type="modified residue" description="Phosphohistidine; by autocatalysis" evidence="2">
    <location>
        <position position="190"/>
    </location>
</feature>
<feature type="modified residue" description="4-aspartylphosphate" evidence="3">
    <location>
        <position position="613"/>
    </location>
</feature>
<feature type="sequence conflict" description="In Ref. 1; AAT86007." evidence="5" ref="1">
    <original>A</original>
    <variation>R</variation>
    <location>
        <position position="484"/>
    </location>
</feature>
<proteinExistence type="evidence at protein level"/>
<dbReference type="EC" id="2.7.13.3"/>
<dbReference type="EC" id="3.1.3.-"/>
<dbReference type="EMBL" id="AY625893">
    <property type="protein sequence ID" value="AAT86007.1"/>
    <property type="molecule type" value="Genomic_DNA"/>
</dbReference>
<dbReference type="EMBL" id="CP000790">
    <property type="protein sequence ID" value="ABU73982.1"/>
    <property type="molecule type" value="Genomic_DNA"/>
</dbReference>
<dbReference type="RefSeq" id="WP_012129595.1">
    <property type="nucleotide sequence ID" value="NC_009784.1"/>
</dbReference>
<dbReference type="SMR" id="A7N6S2"/>
<dbReference type="KEGG" id="vha:VIBHAR_06089"/>
<dbReference type="PATRIC" id="fig|338187.36.peg.4951"/>
<dbReference type="Proteomes" id="UP000008152">
    <property type="component" value="Chromosome II"/>
</dbReference>
<dbReference type="GO" id="GO:0005886">
    <property type="term" value="C:plasma membrane"/>
    <property type="evidence" value="ECO:0007669"/>
    <property type="project" value="UniProtKB-SubCell"/>
</dbReference>
<dbReference type="GO" id="GO:0005524">
    <property type="term" value="F:ATP binding"/>
    <property type="evidence" value="ECO:0007669"/>
    <property type="project" value="UniProtKB-KW"/>
</dbReference>
<dbReference type="GO" id="GO:0004721">
    <property type="term" value="F:phosphoprotein phosphatase activity"/>
    <property type="evidence" value="ECO:0007669"/>
    <property type="project" value="UniProtKB-KW"/>
</dbReference>
<dbReference type="GO" id="GO:0000155">
    <property type="term" value="F:phosphorelay sensor kinase activity"/>
    <property type="evidence" value="ECO:0007669"/>
    <property type="project" value="InterPro"/>
</dbReference>
<dbReference type="CDD" id="cd00082">
    <property type="entry name" value="HisKA"/>
    <property type="match status" value="1"/>
</dbReference>
<dbReference type="CDD" id="cd17546">
    <property type="entry name" value="REC_hyHK_CKI1_RcsC-like"/>
    <property type="match status" value="1"/>
</dbReference>
<dbReference type="Gene3D" id="1.10.287.130">
    <property type="match status" value="1"/>
</dbReference>
<dbReference type="Gene3D" id="3.40.50.2300">
    <property type="match status" value="1"/>
</dbReference>
<dbReference type="Gene3D" id="3.30.565.10">
    <property type="entry name" value="Histidine kinase-like ATPase, C-terminal domain"/>
    <property type="match status" value="1"/>
</dbReference>
<dbReference type="InterPro" id="IPR011006">
    <property type="entry name" value="CheY-like_superfamily"/>
</dbReference>
<dbReference type="InterPro" id="IPR036890">
    <property type="entry name" value="HATPase_C_sf"/>
</dbReference>
<dbReference type="InterPro" id="IPR005467">
    <property type="entry name" value="His_kinase_dom"/>
</dbReference>
<dbReference type="InterPro" id="IPR003661">
    <property type="entry name" value="HisK_dim/P_dom"/>
</dbReference>
<dbReference type="InterPro" id="IPR036097">
    <property type="entry name" value="HisK_dim/P_sf"/>
</dbReference>
<dbReference type="InterPro" id="IPR004358">
    <property type="entry name" value="Sig_transdc_His_kin-like_C"/>
</dbReference>
<dbReference type="InterPro" id="IPR001789">
    <property type="entry name" value="Sig_transdc_resp-reg_receiver"/>
</dbReference>
<dbReference type="PANTHER" id="PTHR43547:SF2">
    <property type="entry name" value="HYBRID SIGNAL TRANSDUCTION HISTIDINE KINASE C"/>
    <property type="match status" value="1"/>
</dbReference>
<dbReference type="PANTHER" id="PTHR43547">
    <property type="entry name" value="TWO-COMPONENT HISTIDINE KINASE"/>
    <property type="match status" value="1"/>
</dbReference>
<dbReference type="Pfam" id="PF02518">
    <property type="entry name" value="HATPase_c"/>
    <property type="match status" value="1"/>
</dbReference>
<dbReference type="Pfam" id="PF00072">
    <property type="entry name" value="Response_reg"/>
    <property type="match status" value="1"/>
</dbReference>
<dbReference type="PRINTS" id="PR00344">
    <property type="entry name" value="BCTRLSENSOR"/>
</dbReference>
<dbReference type="SMART" id="SM00387">
    <property type="entry name" value="HATPase_c"/>
    <property type="match status" value="1"/>
</dbReference>
<dbReference type="SMART" id="SM00448">
    <property type="entry name" value="REC"/>
    <property type="match status" value="1"/>
</dbReference>
<dbReference type="SUPFAM" id="SSF55874">
    <property type="entry name" value="ATPase domain of HSP90 chaperone/DNA topoisomerase II/histidine kinase"/>
    <property type="match status" value="1"/>
</dbReference>
<dbReference type="SUPFAM" id="SSF52172">
    <property type="entry name" value="CheY-like"/>
    <property type="match status" value="1"/>
</dbReference>
<dbReference type="SUPFAM" id="SSF47384">
    <property type="entry name" value="Homodimeric domain of signal transducing histidine kinase"/>
    <property type="match status" value="1"/>
</dbReference>
<dbReference type="PROSITE" id="PS50109">
    <property type="entry name" value="HIS_KIN"/>
    <property type="match status" value="1"/>
</dbReference>
<dbReference type="PROSITE" id="PS50110">
    <property type="entry name" value="RESPONSE_REGULATORY"/>
    <property type="match status" value="1"/>
</dbReference>
<protein>
    <recommendedName>
        <fullName>CAI-1 autoinducer sensor kinase/phosphatase CqsS</fullName>
        <ecNumber>2.7.13.3</ecNumber>
        <ecNumber>3.1.3.-</ecNumber>
    </recommendedName>
    <alternativeName>
        <fullName>Cholerae quorum-sensing sensor</fullName>
    </alternativeName>
</protein>
<sequence length="681" mass="77799">MDAIRKVYQYAEPNLSLVGWMGFIGFPIYYIVWEFMFPQPYENLPLRILCSVLFFGIIYRNRTPFEWRGFLPAYYQVVTTLCLPCFFFYMLLMNNWSNVWVMSFMSAIFLHILLVHITSVMFVQTFVGIGLATFFAWVAQGFHLELTMDWTHVPIFLFIYLFGNLFYFRNQVEHEAKVSIAKSFGAGIAHEMRNPLSGLLTSIDVIQSVLPNPKEGKKEQYTLSDEDVTLLREVSSDAMKIIHSGNETIDLLLTSIDENRVSRSTFKKHSAQSVVESAIESFSYKRSTDRFAISLDVRSEFDFLGSDTLLKYVMYNLFKNAFHHRSSEDFHIHVTMYSDEFANQIVVTDNGSGIAPEVLQSIFQDFYTTGKSGNYGLGLPFCKKVMRSFGGDIRCQSEVGEWSQFTMTFPTIGSSAVKEIKSELTKLKTILFVSEQNILVSKVTDIARFMRFELTVLDVPAVLKNKEYEFEFDLILIDMESLDASGSHIDKVESLLSFTEARIVYMFEHHPIQRARSVSFEPIWVETQAWLLNTRATIDRLLYDANYVVPSMPAKPLDSTNKRTIMVVDDNESLRKFTAMLLEKQGFEVIQTEDGLQAINALNENNVDLILMDIEMPVMDGVEASRQIRGSNKAYASVPIIAHTGDSSPITLDKIGSSGMSDFIVKPADKNRLFDKIANWI</sequence>
<reference key="1">
    <citation type="journal article" date="2004" name="J. Bacteriol.">
        <title>Three parallel quorum-sensing systems regulate gene expression in Vibrio harveyi.</title>
        <authorList>
            <person name="Henke J.M."/>
            <person name="Bassler B.L."/>
        </authorList>
    </citation>
    <scope>NUCLEOTIDE SEQUENCE [GENOMIC DNA]</scope>
    <scope>FUNCTION AS THE CAI-1 SENSOR</scope>
</reference>
<reference key="2">
    <citation type="submission" date="2007-08" db="EMBL/GenBank/DDBJ databases">
        <authorList>
            <consortium name="The Vibrio harveyi Genome Sequencing Project"/>
            <person name="Bassler B."/>
            <person name="Clifton S.W."/>
            <person name="Fulton L."/>
            <person name="Delehaunty K."/>
            <person name="Fronick C."/>
            <person name="Harrison M."/>
            <person name="Markivic C."/>
            <person name="Fulton R."/>
            <person name="Tin-Wollam A.-M."/>
            <person name="Shah N."/>
            <person name="Pepin K."/>
            <person name="Nash W."/>
            <person name="Thiruvilangam P."/>
            <person name="Bhonagiri V."/>
            <person name="Waters C."/>
            <person name="Tu K.C."/>
            <person name="Irgon J."/>
            <person name="Wilson R.K."/>
        </authorList>
    </citation>
    <scope>NUCLEOTIDE SEQUENCE [LARGE SCALE GENOMIC DNA]</scope>
    <source>
        <strain>ATCC BAA-1116 / BB120</strain>
    </source>
</reference>
<organism>
    <name type="scientific">Vibrio campbellii (strain ATCC BAA-1116)</name>
    <dbReference type="NCBI Taxonomy" id="2902295"/>
    <lineage>
        <taxon>Bacteria</taxon>
        <taxon>Pseudomonadati</taxon>
        <taxon>Pseudomonadota</taxon>
        <taxon>Gammaproteobacteria</taxon>
        <taxon>Vibrionales</taxon>
        <taxon>Vibrionaceae</taxon>
        <taxon>Vibrio</taxon>
    </lineage>
</organism>
<comment type="function">
    <text evidence="4">Senses the quorum-sensing autoinducer CAI-1 ((S)-3-hydroxytridecan-4-one) which probably functions as an intragenus signal. The sensory signal is then relayed to LuxU and LuxO.</text>
</comment>
<comment type="catalytic activity">
    <reaction>
        <text>ATP + protein L-histidine = ADP + protein N-phospho-L-histidine.</text>
        <dbReference type="EC" id="2.7.13.3"/>
    </reaction>
</comment>
<comment type="subcellular location">
    <subcellularLocation>
        <location evidence="5">Cell membrane</location>
        <topology evidence="5">Multi-pass membrane protein</topology>
    </subcellularLocation>
</comment>